<feature type="chain" id="PRO_0000223204" description="Auxin-responsive protein IAA5">
    <location>
        <begin position="1"/>
        <end position="271"/>
    </location>
</feature>
<feature type="domain" description="PB1" evidence="2">
    <location>
        <begin position="151"/>
        <end position="255"/>
    </location>
</feature>
<feature type="region of interest" description="Disordered" evidence="3">
    <location>
        <begin position="1"/>
        <end position="96"/>
    </location>
</feature>
<feature type="short sequence motif" description="EAR-like (transcriptional repression)" evidence="1">
    <location>
        <begin position="44"/>
        <end position="48"/>
    </location>
</feature>
<feature type="compositionally biased region" description="Low complexity" evidence="3">
    <location>
        <begin position="14"/>
        <end position="33"/>
    </location>
</feature>
<feature type="compositionally biased region" description="Low complexity" evidence="3">
    <location>
        <begin position="40"/>
        <end position="50"/>
    </location>
</feature>
<keyword id="KW-0927">Auxin signaling pathway</keyword>
<keyword id="KW-0539">Nucleus</keyword>
<keyword id="KW-1185">Reference proteome</keyword>
<keyword id="KW-0678">Repressor</keyword>
<keyword id="KW-0804">Transcription</keyword>
<keyword id="KW-0805">Transcription regulation</keyword>
<organism>
    <name type="scientific">Oryza sativa subsp. japonica</name>
    <name type="common">Rice</name>
    <dbReference type="NCBI Taxonomy" id="39947"/>
    <lineage>
        <taxon>Eukaryota</taxon>
        <taxon>Viridiplantae</taxon>
        <taxon>Streptophyta</taxon>
        <taxon>Embryophyta</taxon>
        <taxon>Tracheophyta</taxon>
        <taxon>Spermatophyta</taxon>
        <taxon>Magnoliopsida</taxon>
        <taxon>Liliopsida</taxon>
        <taxon>Poales</taxon>
        <taxon>Poaceae</taxon>
        <taxon>BOP clade</taxon>
        <taxon>Oryzoideae</taxon>
        <taxon>Oryzeae</taxon>
        <taxon>Oryzinae</taxon>
        <taxon>Oryza</taxon>
        <taxon>Oryza sativa</taxon>
    </lineage>
</organism>
<comment type="function">
    <text evidence="1">Aux/IAA proteins are short-lived transcriptional factors that function as repressors of early auxin response genes at low auxin concentrations.</text>
</comment>
<comment type="subunit">
    <text evidence="1">Homodimers and heterodimers.</text>
</comment>
<comment type="subcellular location">
    <subcellularLocation>
        <location evidence="1">Nucleus</location>
    </subcellularLocation>
</comment>
<comment type="similarity">
    <text evidence="4">Belongs to the Aux/IAA family.</text>
</comment>
<evidence type="ECO:0000250" key="1"/>
<evidence type="ECO:0000255" key="2">
    <source>
        <dbReference type="PROSITE-ProRule" id="PRU01081"/>
    </source>
</evidence>
<evidence type="ECO:0000256" key="3">
    <source>
        <dbReference type="SAM" id="MobiDB-lite"/>
    </source>
</evidence>
<evidence type="ECO:0000305" key="4"/>
<reference key="1">
    <citation type="journal article" date="2002" name="Nature">
        <title>The genome sequence and structure of rice chromosome 1.</title>
        <authorList>
            <person name="Sasaki T."/>
            <person name="Matsumoto T."/>
            <person name="Yamamoto K."/>
            <person name="Sakata K."/>
            <person name="Baba T."/>
            <person name="Katayose Y."/>
            <person name="Wu J."/>
            <person name="Niimura Y."/>
            <person name="Cheng Z."/>
            <person name="Nagamura Y."/>
            <person name="Antonio B.A."/>
            <person name="Kanamori H."/>
            <person name="Hosokawa S."/>
            <person name="Masukawa M."/>
            <person name="Arikawa K."/>
            <person name="Chiden Y."/>
            <person name="Hayashi M."/>
            <person name="Okamoto M."/>
            <person name="Ando T."/>
            <person name="Aoki H."/>
            <person name="Arita K."/>
            <person name="Hamada M."/>
            <person name="Harada C."/>
            <person name="Hijishita S."/>
            <person name="Honda M."/>
            <person name="Ichikawa Y."/>
            <person name="Idonuma A."/>
            <person name="Iijima M."/>
            <person name="Ikeda M."/>
            <person name="Ikeno M."/>
            <person name="Ito S."/>
            <person name="Ito T."/>
            <person name="Ito Y."/>
            <person name="Ito Y."/>
            <person name="Iwabuchi A."/>
            <person name="Kamiya K."/>
            <person name="Karasawa W."/>
            <person name="Katagiri S."/>
            <person name="Kikuta A."/>
            <person name="Kobayashi N."/>
            <person name="Kono I."/>
            <person name="Machita K."/>
            <person name="Maehara T."/>
            <person name="Mizuno H."/>
            <person name="Mizubayashi T."/>
            <person name="Mukai Y."/>
            <person name="Nagasaki H."/>
            <person name="Nakashima M."/>
            <person name="Nakama Y."/>
            <person name="Nakamichi Y."/>
            <person name="Nakamura M."/>
            <person name="Namiki N."/>
            <person name="Negishi M."/>
            <person name="Ohta I."/>
            <person name="Ono N."/>
            <person name="Saji S."/>
            <person name="Sakai K."/>
            <person name="Shibata M."/>
            <person name="Shimokawa T."/>
            <person name="Shomura A."/>
            <person name="Song J."/>
            <person name="Takazaki Y."/>
            <person name="Terasawa K."/>
            <person name="Tsuji K."/>
            <person name="Waki K."/>
            <person name="Yamagata H."/>
            <person name="Yamane H."/>
            <person name="Yoshiki S."/>
            <person name="Yoshihara R."/>
            <person name="Yukawa K."/>
            <person name="Zhong H."/>
            <person name="Iwama H."/>
            <person name="Endo T."/>
            <person name="Ito H."/>
            <person name="Hahn J.H."/>
            <person name="Kim H.-I."/>
            <person name="Eun M.-Y."/>
            <person name="Yano M."/>
            <person name="Jiang J."/>
            <person name="Gojobori T."/>
        </authorList>
    </citation>
    <scope>NUCLEOTIDE SEQUENCE [LARGE SCALE GENOMIC DNA]</scope>
    <source>
        <strain>cv. Nipponbare</strain>
    </source>
</reference>
<reference key="2">
    <citation type="journal article" date="2005" name="Nature">
        <title>The map-based sequence of the rice genome.</title>
        <authorList>
            <consortium name="International rice genome sequencing project (IRGSP)"/>
        </authorList>
    </citation>
    <scope>NUCLEOTIDE SEQUENCE [LARGE SCALE GENOMIC DNA]</scope>
    <source>
        <strain>cv. Nipponbare</strain>
    </source>
</reference>
<reference key="3">
    <citation type="journal article" date="2008" name="Nucleic Acids Res.">
        <title>The rice annotation project database (RAP-DB): 2008 update.</title>
        <authorList>
            <consortium name="The rice annotation project (RAP)"/>
        </authorList>
    </citation>
    <scope>GENOME REANNOTATION</scope>
    <source>
        <strain>cv. Nipponbare</strain>
    </source>
</reference>
<reference key="4">
    <citation type="journal article" date="2013" name="Rice">
        <title>Improvement of the Oryza sativa Nipponbare reference genome using next generation sequence and optical map data.</title>
        <authorList>
            <person name="Kawahara Y."/>
            <person name="de la Bastide M."/>
            <person name="Hamilton J.P."/>
            <person name="Kanamori H."/>
            <person name="McCombie W.R."/>
            <person name="Ouyang S."/>
            <person name="Schwartz D.C."/>
            <person name="Tanaka T."/>
            <person name="Wu J."/>
            <person name="Zhou S."/>
            <person name="Childs K.L."/>
            <person name="Davidson R.M."/>
            <person name="Lin H."/>
            <person name="Quesada-Ocampo L."/>
            <person name="Vaillancourt B."/>
            <person name="Sakai H."/>
            <person name="Lee S.S."/>
            <person name="Kim J."/>
            <person name="Numa H."/>
            <person name="Itoh T."/>
            <person name="Buell C.R."/>
            <person name="Matsumoto T."/>
        </authorList>
    </citation>
    <scope>GENOME REANNOTATION</scope>
    <source>
        <strain>cv. Nipponbare</strain>
    </source>
</reference>
<reference key="5">
    <citation type="journal article" date="2005" name="PLoS Biol.">
        <title>The genomes of Oryza sativa: a history of duplications.</title>
        <authorList>
            <person name="Yu J."/>
            <person name="Wang J."/>
            <person name="Lin W."/>
            <person name="Li S."/>
            <person name="Li H."/>
            <person name="Zhou J."/>
            <person name="Ni P."/>
            <person name="Dong W."/>
            <person name="Hu S."/>
            <person name="Zeng C."/>
            <person name="Zhang J."/>
            <person name="Zhang Y."/>
            <person name="Li R."/>
            <person name="Xu Z."/>
            <person name="Li S."/>
            <person name="Li X."/>
            <person name="Zheng H."/>
            <person name="Cong L."/>
            <person name="Lin L."/>
            <person name="Yin J."/>
            <person name="Geng J."/>
            <person name="Li G."/>
            <person name="Shi J."/>
            <person name="Liu J."/>
            <person name="Lv H."/>
            <person name="Li J."/>
            <person name="Wang J."/>
            <person name="Deng Y."/>
            <person name="Ran L."/>
            <person name="Shi X."/>
            <person name="Wang X."/>
            <person name="Wu Q."/>
            <person name="Li C."/>
            <person name="Ren X."/>
            <person name="Wang J."/>
            <person name="Wang X."/>
            <person name="Li D."/>
            <person name="Liu D."/>
            <person name="Zhang X."/>
            <person name="Ji Z."/>
            <person name="Zhao W."/>
            <person name="Sun Y."/>
            <person name="Zhang Z."/>
            <person name="Bao J."/>
            <person name="Han Y."/>
            <person name="Dong L."/>
            <person name="Ji J."/>
            <person name="Chen P."/>
            <person name="Wu S."/>
            <person name="Liu J."/>
            <person name="Xiao Y."/>
            <person name="Bu D."/>
            <person name="Tan J."/>
            <person name="Yang L."/>
            <person name="Ye C."/>
            <person name="Zhang J."/>
            <person name="Xu J."/>
            <person name="Zhou Y."/>
            <person name="Yu Y."/>
            <person name="Zhang B."/>
            <person name="Zhuang S."/>
            <person name="Wei H."/>
            <person name="Liu B."/>
            <person name="Lei M."/>
            <person name="Yu H."/>
            <person name="Li Y."/>
            <person name="Xu H."/>
            <person name="Wei S."/>
            <person name="He X."/>
            <person name="Fang L."/>
            <person name="Zhang Z."/>
            <person name="Zhang Y."/>
            <person name="Huang X."/>
            <person name="Su Z."/>
            <person name="Tong W."/>
            <person name="Li J."/>
            <person name="Tong Z."/>
            <person name="Li S."/>
            <person name="Ye J."/>
            <person name="Wang L."/>
            <person name="Fang L."/>
            <person name="Lei T."/>
            <person name="Chen C.-S."/>
            <person name="Chen H.-C."/>
            <person name="Xu Z."/>
            <person name="Li H."/>
            <person name="Huang H."/>
            <person name="Zhang F."/>
            <person name="Xu H."/>
            <person name="Li N."/>
            <person name="Zhao C."/>
            <person name="Li S."/>
            <person name="Dong L."/>
            <person name="Huang Y."/>
            <person name="Li L."/>
            <person name="Xi Y."/>
            <person name="Qi Q."/>
            <person name="Li W."/>
            <person name="Zhang B."/>
            <person name="Hu W."/>
            <person name="Zhang Y."/>
            <person name="Tian X."/>
            <person name="Jiao Y."/>
            <person name="Liang X."/>
            <person name="Jin J."/>
            <person name="Gao L."/>
            <person name="Zheng W."/>
            <person name="Hao B."/>
            <person name="Liu S.-M."/>
            <person name="Wang W."/>
            <person name="Yuan L."/>
            <person name="Cao M."/>
            <person name="McDermott J."/>
            <person name="Samudrala R."/>
            <person name="Wang J."/>
            <person name="Wong G.K.-S."/>
            <person name="Yang H."/>
        </authorList>
    </citation>
    <scope>NUCLEOTIDE SEQUENCE [LARGE SCALE GENOMIC DNA]</scope>
    <source>
        <strain>cv. Nipponbare</strain>
    </source>
</reference>
<reference key="6">
    <citation type="journal article" date="2003" name="Science">
        <title>Collection, mapping, and annotation of over 28,000 cDNA clones from japonica rice.</title>
        <authorList>
            <consortium name="The rice full-length cDNA consortium"/>
        </authorList>
    </citation>
    <scope>NUCLEOTIDE SEQUENCE [LARGE SCALE MRNA]</scope>
    <source>
        <strain>cv. Nipponbare</strain>
    </source>
</reference>
<reference key="7">
    <citation type="journal article" date="2006" name="Funct. Integr. Genomics">
        <title>Structure and expression analysis of early auxin-responsive Aux/IAA gene family in rice (Oryza sativa).</title>
        <authorList>
            <person name="Jain M."/>
            <person name="Kaur N."/>
            <person name="Garg R."/>
            <person name="Thakur J.K."/>
            <person name="Tyagi A.K."/>
            <person name="Khurana J.P."/>
        </authorList>
    </citation>
    <scope>NOMENCLATURE</scope>
</reference>
<dbReference type="EMBL" id="AP003374">
    <property type="protein sequence ID" value="BAB93328.1"/>
    <property type="molecule type" value="Genomic_DNA"/>
</dbReference>
<dbReference type="EMBL" id="AP008207">
    <property type="protein sequence ID" value="BAF05761.1"/>
    <property type="molecule type" value="Genomic_DNA"/>
</dbReference>
<dbReference type="EMBL" id="AP014957">
    <property type="protein sequence ID" value="BAS73656.1"/>
    <property type="molecule type" value="Genomic_DNA"/>
</dbReference>
<dbReference type="EMBL" id="CM000138">
    <property type="protein sequence ID" value="EAZ13069.1"/>
    <property type="molecule type" value="Genomic_DNA"/>
</dbReference>
<dbReference type="EMBL" id="AK106121">
    <property type="status" value="NOT_ANNOTATED_CDS"/>
    <property type="molecule type" value="mRNA"/>
</dbReference>
<dbReference type="RefSeq" id="XP_015621658.1">
    <property type="nucleotide sequence ID" value="XM_015766172.1"/>
</dbReference>
<dbReference type="SMR" id="Q0JKG7"/>
<dbReference type="FunCoup" id="Q0JKG7">
    <property type="interactions" value="272"/>
</dbReference>
<dbReference type="STRING" id="39947.Q0JKG7"/>
<dbReference type="PaxDb" id="39947-Q0JKG7"/>
<dbReference type="EnsemblPlants" id="Os01t0675700-01">
    <property type="protein sequence ID" value="Os01t0675700-01"/>
    <property type="gene ID" value="Os01g0675700"/>
</dbReference>
<dbReference type="EnsemblPlants" id="Os01t0675700-02">
    <property type="protein sequence ID" value="Os01t0675700-02"/>
    <property type="gene ID" value="Os01g0675700"/>
</dbReference>
<dbReference type="Gramene" id="Os01t0675700-01">
    <property type="protein sequence ID" value="Os01t0675700-01"/>
    <property type="gene ID" value="Os01g0675700"/>
</dbReference>
<dbReference type="Gramene" id="Os01t0675700-02">
    <property type="protein sequence ID" value="Os01t0675700-02"/>
    <property type="gene ID" value="Os01g0675700"/>
</dbReference>
<dbReference type="KEGG" id="dosa:Os01g0675700"/>
<dbReference type="eggNOG" id="ENOG502R3EF">
    <property type="taxonomic scope" value="Eukaryota"/>
</dbReference>
<dbReference type="HOGENOM" id="CLU_049393_1_0_1"/>
<dbReference type="InParanoid" id="Q0JKG7"/>
<dbReference type="OMA" id="XARAGEG"/>
<dbReference type="OrthoDB" id="673488at2759"/>
<dbReference type="PlantReactome" id="R-OSA-5608118">
    <property type="pathway name" value="Auxin signalling"/>
</dbReference>
<dbReference type="Proteomes" id="UP000000763">
    <property type="component" value="Chromosome 1"/>
</dbReference>
<dbReference type="Proteomes" id="UP000007752">
    <property type="component" value="Chromosome 1"/>
</dbReference>
<dbReference type="Proteomes" id="UP000059680">
    <property type="component" value="Chromosome 1"/>
</dbReference>
<dbReference type="GO" id="GO:0005634">
    <property type="term" value="C:nucleus"/>
    <property type="evidence" value="ECO:0007669"/>
    <property type="project" value="UniProtKB-SubCell"/>
</dbReference>
<dbReference type="GO" id="GO:0009734">
    <property type="term" value="P:auxin-activated signaling pathway"/>
    <property type="evidence" value="ECO:0007669"/>
    <property type="project" value="UniProtKB-KW"/>
</dbReference>
<dbReference type="GO" id="GO:0006355">
    <property type="term" value="P:regulation of DNA-templated transcription"/>
    <property type="evidence" value="ECO:0007669"/>
    <property type="project" value="InterPro"/>
</dbReference>
<dbReference type="FunFam" id="3.10.20.90:FF:000078">
    <property type="entry name" value="Auxin-responsive protein"/>
    <property type="match status" value="1"/>
</dbReference>
<dbReference type="Gene3D" id="3.10.20.90">
    <property type="entry name" value="Phosphatidylinositol 3-kinase Catalytic Subunit, Chain A, domain 1"/>
    <property type="match status" value="1"/>
</dbReference>
<dbReference type="InterPro" id="IPR033389">
    <property type="entry name" value="AUX/IAA_dom"/>
</dbReference>
<dbReference type="InterPro" id="IPR003311">
    <property type="entry name" value="AUX_IAA"/>
</dbReference>
<dbReference type="InterPro" id="IPR053793">
    <property type="entry name" value="PB1-like"/>
</dbReference>
<dbReference type="PANTHER" id="PTHR31734">
    <property type="entry name" value="AUXIN-RESPONSIVE PROTEIN IAA17"/>
    <property type="match status" value="1"/>
</dbReference>
<dbReference type="PANTHER" id="PTHR31734:SF16">
    <property type="entry name" value="AUXIN-RESPONSIVE PROTEIN IAA5"/>
    <property type="match status" value="1"/>
</dbReference>
<dbReference type="Pfam" id="PF02309">
    <property type="entry name" value="AUX_IAA"/>
    <property type="match status" value="1"/>
</dbReference>
<dbReference type="SUPFAM" id="SSF54277">
    <property type="entry name" value="CAD &amp; PB1 domains"/>
    <property type="match status" value="1"/>
</dbReference>
<dbReference type="PROSITE" id="PS51745">
    <property type="entry name" value="PB1"/>
    <property type="match status" value="1"/>
</dbReference>
<protein>
    <recommendedName>
        <fullName>Auxin-responsive protein IAA5</fullName>
    </recommendedName>
    <alternativeName>
        <fullName>Indoleacetic acid-induced protein 5</fullName>
    </alternativeName>
</protein>
<accession>Q0JKG7</accession>
<accession>A0A0P0V6H5</accession>
<accession>Q59AF3</accession>
<accession>Q8LQP8</accession>
<name>IAA5_ORYSJ</name>
<gene>
    <name type="primary">IAA5</name>
    <name type="synonym">IAA8</name>
    <name type="ordered locus">Os01g0675700</name>
    <name type="ordered locus">LOC_Os01g48444</name>
    <name type="ORF">OJ1117_G01.13</name>
    <name type="ORF">OsJ_002894</name>
</gene>
<sequence length="271" mass="28431">MSPPLEPHDYIGLSAAAASPTPSSSSCSSSPNPGGEARGPRLTLRLGLPGSESPEREVVAAGLTLGPLPPTTTKAASKRAFPDSSPRHGASSGSVAAAAACQDKAAPAAAPPAAKAQVVGWPPVRNYRKNTLAASASKGKGEDKGTAEGGPLYVKVSMDGAPYLRKVDLKMYSSYEDLSMALEKMFSCFITGQSGLRKSSNRDRLTNGSKADALQDQEYVLTYEDKDADWMLVGDLPWDLFTTICRKLKIMRGSDAAGIAPRSIEQSGQSR</sequence>
<proteinExistence type="evidence at transcript level"/>